<reference key="1">
    <citation type="journal article" date="2004" name="Nat. Genet.">
        <title>Complete sequencing and characterization of 21,243 full-length human cDNAs.</title>
        <authorList>
            <person name="Ota T."/>
            <person name="Suzuki Y."/>
            <person name="Nishikawa T."/>
            <person name="Otsuki T."/>
            <person name="Sugiyama T."/>
            <person name="Irie R."/>
            <person name="Wakamatsu A."/>
            <person name="Hayashi K."/>
            <person name="Sato H."/>
            <person name="Nagai K."/>
            <person name="Kimura K."/>
            <person name="Makita H."/>
            <person name="Sekine M."/>
            <person name="Obayashi M."/>
            <person name="Nishi T."/>
            <person name="Shibahara T."/>
            <person name="Tanaka T."/>
            <person name="Ishii S."/>
            <person name="Yamamoto J."/>
            <person name="Saito K."/>
            <person name="Kawai Y."/>
            <person name="Isono Y."/>
            <person name="Nakamura Y."/>
            <person name="Nagahari K."/>
            <person name="Murakami K."/>
            <person name="Yasuda T."/>
            <person name="Iwayanagi T."/>
            <person name="Wagatsuma M."/>
            <person name="Shiratori A."/>
            <person name="Sudo H."/>
            <person name="Hosoiri T."/>
            <person name="Kaku Y."/>
            <person name="Kodaira H."/>
            <person name="Kondo H."/>
            <person name="Sugawara M."/>
            <person name="Takahashi M."/>
            <person name="Kanda K."/>
            <person name="Yokoi T."/>
            <person name="Furuya T."/>
            <person name="Kikkawa E."/>
            <person name="Omura Y."/>
            <person name="Abe K."/>
            <person name="Kamihara K."/>
            <person name="Katsuta N."/>
            <person name="Sato K."/>
            <person name="Tanikawa M."/>
            <person name="Yamazaki M."/>
            <person name="Ninomiya K."/>
            <person name="Ishibashi T."/>
            <person name="Yamashita H."/>
            <person name="Murakawa K."/>
            <person name="Fujimori K."/>
            <person name="Tanai H."/>
            <person name="Kimata M."/>
            <person name="Watanabe M."/>
            <person name="Hiraoka S."/>
            <person name="Chiba Y."/>
            <person name="Ishida S."/>
            <person name="Ono Y."/>
            <person name="Takiguchi S."/>
            <person name="Watanabe S."/>
            <person name="Yosida M."/>
            <person name="Hotuta T."/>
            <person name="Kusano J."/>
            <person name="Kanehori K."/>
            <person name="Takahashi-Fujii A."/>
            <person name="Hara H."/>
            <person name="Tanase T.-O."/>
            <person name="Nomura Y."/>
            <person name="Togiya S."/>
            <person name="Komai F."/>
            <person name="Hara R."/>
            <person name="Takeuchi K."/>
            <person name="Arita M."/>
            <person name="Imose N."/>
            <person name="Musashino K."/>
            <person name="Yuuki H."/>
            <person name="Oshima A."/>
            <person name="Sasaki N."/>
            <person name="Aotsuka S."/>
            <person name="Yoshikawa Y."/>
            <person name="Matsunawa H."/>
            <person name="Ichihara T."/>
            <person name="Shiohata N."/>
            <person name="Sano S."/>
            <person name="Moriya S."/>
            <person name="Momiyama H."/>
            <person name="Satoh N."/>
            <person name="Takami S."/>
            <person name="Terashima Y."/>
            <person name="Suzuki O."/>
            <person name="Nakagawa S."/>
            <person name="Senoh A."/>
            <person name="Mizoguchi H."/>
            <person name="Goto Y."/>
            <person name="Shimizu F."/>
            <person name="Wakebe H."/>
            <person name="Hishigaki H."/>
            <person name="Watanabe T."/>
            <person name="Sugiyama A."/>
            <person name="Takemoto M."/>
            <person name="Kawakami B."/>
            <person name="Yamazaki M."/>
            <person name="Watanabe K."/>
            <person name="Kumagai A."/>
            <person name="Itakura S."/>
            <person name="Fukuzumi Y."/>
            <person name="Fujimori Y."/>
            <person name="Komiyama M."/>
            <person name="Tashiro H."/>
            <person name="Tanigami A."/>
            <person name="Fujiwara T."/>
            <person name="Ono T."/>
            <person name="Yamada K."/>
            <person name="Fujii Y."/>
            <person name="Ozaki K."/>
            <person name="Hirao M."/>
            <person name="Ohmori Y."/>
            <person name="Kawabata A."/>
            <person name="Hikiji T."/>
            <person name="Kobatake N."/>
            <person name="Inagaki H."/>
            <person name="Ikema Y."/>
            <person name="Okamoto S."/>
            <person name="Okitani R."/>
            <person name="Kawakami T."/>
            <person name="Noguchi S."/>
            <person name="Itoh T."/>
            <person name="Shigeta K."/>
            <person name="Senba T."/>
            <person name="Matsumura K."/>
            <person name="Nakajima Y."/>
            <person name="Mizuno T."/>
            <person name="Morinaga M."/>
            <person name="Sasaki M."/>
            <person name="Togashi T."/>
            <person name="Oyama M."/>
            <person name="Hata H."/>
            <person name="Watanabe M."/>
            <person name="Komatsu T."/>
            <person name="Mizushima-Sugano J."/>
            <person name="Satoh T."/>
            <person name="Shirai Y."/>
            <person name="Takahashi Y."/>
            <person name="Nakagawa K."/>
            <person name="Okumura K."/>
            <person name="Nagase T."/>
            <person name="Nomura N."/>
            <person name="Kikuchi H."/>
            <person name="Masuho Y."/>
            <person name="Yamashita R."/>
            <person name="Nakai K."/>
            <person name="Yada T."/>
            <person name="Nakamura Y."/>
            <person name="Ohara O."/>
            <person name="Isogai T."/>
            <person name="Sugano S."/>
        </authorList>
    </citation>
    <scope>NUCLEOTIDE SEQUENCE [LARGE SCALE MRNA] (ISOFORM 2)</scope>
    <source>
        <tissue>Thymus</tissue>
    </source>
</reference>
<reference key="2">
    <citation type="journal article" date="2007" name="BMC Genomics">
        <title>The full-ORF clone resource of the German cDNA consortium.</title>
        <authorList>
            <person name="Bechtel S."/>
            <person name="Rosenfelder H."/>
            <person name="Duda A."/>
            <person name="Schmidt C.P."/>
            <person name="Ernst U."/>
            <person name="Wellenreuther R."/>
            <person name="Mehrle A."/>
            <person name="Schuster C."/>
            <person name="Bahr A."/>
            <person name="Bloecker H."/>
            <person name="Heubner D."/>
            <person name="Hoerlein A."/>
            <person name="Michel G."/>
            <person name="Wedler H."/>
            <person name="Koehrer K."/>
            <person name="Ottenwaelder B."/>
            <person name="Poustka A."/>
            <person name="Wiemann S."/>
            <person name="Schupp I."/>
        </authorList>
    </citation>
    <scope>NUCLEOTIDE SEQUENCE [LARGE SCALE MRNA] (ISOFORM 2)</scope>
    <source>
        <tissue>Esophageal carcinoma</tissue>
    </source>
</reference>
<reference key="3">
    <citation type="journal article" date="2003" name="Nature">
        <title>The DNA sequence and analysis of human chromosome 6.</title>
        <authorList>
            <person name="Mungall A.J."/>
            <person name="Palmer S.A."/>
            <person name="Sims S.K."/>
            <person name="Edwards C.A."/>
            <person name="Ashurst J.L."/>
            <person name="Wilming L."/>
            <person name="Jones M.C."/>
            <person name="Horton R."/>
            <person name="Hunt S.E."/>
            <person name="Scott C.E."/>
            <person name="Gilbert J.G.R."/>
            <person name="Clamp M.E."/>
            <person name="Bethel G."/>
            <person name="Milne S."/>
            <person name="Ainscough R."/>
            <person name="Almeida J.P."/>
            <person name="Ambrose K.D."/>
            <person name="Andrews T.D."/>
            <person name="Ashwell R.I.S."/>
            <person name="Babbage A.K."/>
            <person name="Bagguley C.L."/>
            <person name="Bailey J."/>
            <person name="Banerjee R."/>
            <person name="Barker D.J."/>
            <person name="Barlow K.F."/>
            <person name="Bates K."/>
            <person name="Beare D.M."/>
            <person name="Beasley H."/>
            <person name="Beasley O."/>
            <person name="Bird C.P."/>
            <person name="Blakey S.E."/>
            <person name="Bray-Allen S."/>
            <person name="Brook J."/>
            <person name="Brown A.J."/>
            <person name="Brown J.Y."/>
            <person name="Burford D.C."/>
            <person name="Burrill W."/>
            <person name="Burton J."/>
            <person name="Carder C."/>
            <person name="Carter N.P."/>
            <person name="Chapman J.C."/>
            <person name="Clark S.Y."/>
            <person name="Clark G."/>
            <person name="Clee C.M."/>
            <person name="Clegg S."/>
            <person name="Cobley V."/>
            <person name="Collier R.E."/>
            <person name="Collins J.E."/>
            <person name="Colman L.K."/>
            <person name="Corby N.R."/>
            <person name="Coville G.J."/>
            <person name="Culley K.M."/>
            <person name="Dhami P."/>
            <person name="Davies J."/>
            <person name="Dunn M."/>
            <person name="Earthrowl M.E."/>
            <person name="Ellington A.E."/>
            <person name="Evans K.A."/>
            <person name="Faulkner L."/>
            <person name="Francis M.D."/>
            <person name="Frankish A."/>
            <person name="Frankland J."/>
            <person name="French L."/>
            <person name="Garner P."/>
            <person name="Garnett J."/>
            <person name="Ghori M.J."/>
            <person name="Gilby L.M."/>
            <person name="Gillson C.J."/>
            <person name="Glithero R.J."/>
            <person name="Grafham D.V."/>
            <person name="Grant M."/>
            <person name="Gribble S."/>
            <person name="Griffiths C."/>
            <person name="Griffiths M.N.D."/>
            <person name="Hall R."/>
            <person name="Halls K.S."/>
            <person name="Hammond S."/>
            <person name="Harley J.L."/>
            <person name="Hart E.A."/>
            <person name="Heath P.D."/>
            <person name="Heathcott R."/>
            <person name="Holmes S.J."/>
            <person name="Howden P.J."/>
            <person name="Howe K.L."/>
            <person name="Howell G.R."/>
            <person name="Huckle E."/>
            <person name="Humphray S.J."/>
            <person name="Humphries M.D."/>
            <person name="Hunt A.R."/>
            <person name="Johnson C.M."/>
            <person name="Joy A.A."/>
            <person name="Kay M."/>
            <person name="Keenan S.J."/>
            <person name="Kimberley A.M."/>
            <person name="King A."/>
            <person name="Laird G.K."/>
            <person name="Langford C."/>
            <person name="Lawlor S."/>
            <person name="Leongamornlert D.A."/>
            <person name="Leversha M."/>
            <person name="Lloyd C.R."/>
            <person name="Lloyd D.M."/>
            <person name="Loveland J.E."/>
            <person name="Lovell J."/>
            <person name="Martin S."/>
            <person name="Mashreghi-Mohammadi M."/>
            <person name="Maslen G.L."/>
            <person name="Matthews L."/>
            <person name="McCann O.T."/>
            <person name="McLaren S.J."/>
            <person name="McLay K."/>
            <person name="McMurray A."/>
            <person name="Moore M.J.F."/>
            <person name="Mullikin J.C."/>
            <person name="Niblett D."/>
            <person name="Nickerson T."/>
            <person name="Novik K.L."/>
            <person name="Oliver K."/>
            <person name="Overton-Larty E.K."/>
            <person name="Parker A."/>
            <person name="Patel R."/>
            <person name="Pearce A.V."/>
            <person name="Peck A.I."/>
            <person name="Phillimore B.J.C.T."/>
            <person name="Phillips S."/>
            <person name="Plumb R.W."/>
            <person name="Porter K.M."/>
            <person name="Ramsey Y."/>
            <person name="Ranby S.A."/>
            <person name="Rice C.M."/>
            <person name="Ross M.T."/>
            <person name="Searle S.M."/>
            <person name="Sehra H.K."/>
            <person name="Sheridan E."/>
            <person name="Skuce C.D."/>
            <person name="Smith S."/>
            <person name="Smith M."/>
            <person name="Spraggon L."/>
            <person name="Squares S.L."/>
            <person name="Steward C.A."/>
            <person name="Sycamore N."/>
            <person name="Tamlyn-Hall G."/>
            <person name="Tester J."/>
            <person name="Theaker A.J."/>
            <person name="Thomas D.W."/>
            <person name="Thorpe A."/>
            <person name="Tracey A."/>
            <person name="Tromans A."/>
            <person name="Tubby B."/>
            <person name="Wall M."/>
            <person name="Wallis J.M."/>
            <person name="West A.P."/>
            <person name="White S.S."/>
            <person name="Whitehead S.L."/>
            <person name="Whittaker H."/>
            <person name="Wild A."/>
            <person name="Willey D.J."/>
            <person name="Wilmer T.E."/>
            <person name="Wood J.M."/>
            <person name="Wray P.W."/>
            <person name="Wyatt J.C."/>
            <person name="Young L."/>
            <person name="Younger R.M."/>
            <person name="Bentley D.R."/>
            <person name="Coulson A."/>
            <person name="Durbin R.M."/>
            <person name="Hubbard T."/>
            <person name="Sulston J.E."/>
            <person name="Dunham I."/>
            <person name="Rogers J."/>
            <person name="Beck S."/>
        </authorList>
    </citation>
    <scope>NUCLEOTIDE SEQUENCE [LARGE SCALE GENOMIC DNA]</scope>
</reference>
<reference key="4">
    <citation type="submission" date="2005-09" db="EMBL/GenBank/DDBJ databases">
        <authorList>
            <person name="Mural R.J."/>
            <person name="Istrail S."/>
            <person name="Sutton G.G."/>
            <person name="Florea L."/>
            <person name="Halpern A.L."/>
            <person name="Mobarry C.M."/>
            <person name="Lippert R."/>
            <person name="Walenz B."/>
            <person name="Shatkay H."/>
            <person name="Dew I."/>
            <person name="Miller J.R."/>
            <person name="Flanigan M.J."/>
            <person name="Edwards N.J."/>
            <person name="Bolanos R."/>
            <person name="Fasulo D."/>
            <person name="Halldorsson B.V."/>
            <person name="Hannenhalli S."/>
            <person name="Turner R."/>
            <person name="Yooseph S."/>
            <person name="Lu F."/>
            <person name="Nusskern D.R."/>
            <person name="Shue B.C."/>
            <person name="Zheng X.H."/>
            <person name="Zhong F."/>
            <person name="Delcher A.L."/>
            <person name="Huson D.H."/>
            <person name="Kravitz S.A."/>
            <person name="Mouchard L."/>
            <person name="Reinert K."/>
            <person name="Remington K.A."/>
            <person name="Clark A.G."/>
            <person name="Waterman M.S."/>
            <person name="Eichler E.E."/>
            <person name="Adams M.D."/>
            <person name="Hunkapiller M.W."/>
            <person name="Myers E.W."/>
            <person name="Venter J.C."/>
        </authorList>
    </citation>
    <scope>NUCLEOTIDE SEQUENCE [LARGE SCALE GENOMIC DNA]</scope>
</reference>
<reference key="5">
    <citation type="journal article" date="2004" name="Genome Res.">
        <title>The status, quality, and expansion of the NIH full-length cDNA project: the Mammalian Gene Collection (MGC).</title>
        <authorList>
            <consortium name="The MGC Project Team"/>
        </authorList>
    </citation>
    <scope>NUCLEOTIDE SEQUENCE [LARGE SCALE MRNA] OF 3-191 (ISOFORM 1)</scope>
    <source>
        <tissue>Duodenum</tissue>
    </source>
</reference>
<reference key="6">
    <citation type="journal article" date="2002" name="Biochimie">
        <title>RNA editing by adenosine deaminases generates RNA and protein diversity.</title>
        <authorList>
            <person name="Schaub M."/>
            <person name="Keller W."/>
        </authorList>
    </citation>
    <scope>IDENTIFICATION</scope>
</reference>
<reference key="7">
    <citation type="submission" date="2009-02" db="PDB data bank">
        <title>Crystal structure of human tRNA-specific adenosine-34 deaminase subunit ADAT2.</title>
        <authorList>
            <consortium name="Structural genomics consortium (SGC)"/>
        </authorList>
    </citation>
    <scope>X-RAY CRYSTALLOGRAPHY (2.8 ANGSTROMS) OF 20-185 IN COMPLEX WITH ZINC IONS</scope>
</reference>
<comment type="function">
    <text evidence="1">Probably participates in deamination of adenosine-34 to inosine in many tRNAs.</text>
</comment>
<comment type="catalytic activity">
    <reaction evidence="6">
        <text>adenosine(34) in tRNA + H2O + H(+) = inosine(34) in tRNA + NH4(+)</text>
        <dbReference type="Rhea" id="RHEA:43168"/>
        <dbReference type="Rhea" id="RHEA-COMP:10373"/>
        <dbReference type="Rhea" id="RHEA-COMP:10374"/>
        <dbReference type="ChEBI" id="CHEBI:15377"/>
        <dbReference type="ChEBI" id="CHEBI:15378"/>
        <dbReference type="ChEBI" id="CHEBI:28938"/>
        <dbReference type="ChEBI" id="CHEBI:74411"/>
        <dbReference type="ChEBI" id="CHEBI:82852"/>
        <dbReference type="EC" id="3.5.4.33"/>
    </reaction>
</comment>
<comment type="cofactor">
    <cofactor evidence="1">
        <name>Zn(2+)</name>
        <dbReference type="ChEBI" id="CHEBI:29105"/>
    </cofactor>
</comment>
<comment type="interaction">
    <interactant intactId="EBI-2809203">
        <id>Q7Z6V5</id>
    </interactant>
    <interactant intactId="EBI-3922811">
        <id>Q96EY9</id>
        <label>ADAT3</label>
    </interactant>
    <organismsDiffer>false</organismsDiffer>
    <experiments>2</experiments>
</comment>
<comment type="interaction">
    <interactant intactId="EBI-2809203">
        <id>Q7Z6V5</id>
    </interactant>
    <interactant intactId="EBI-741200">
        <id>Q8IVL1</id>
        <label>NAV2</label>
    </interactant>
    <organismsDiffer>false</organismsDiffer>
    <experiments>3</experiments>
</comment>
<comment type="interaction">
    <interactant intactId="EBI-2809203">
        <id>Q7Z6V5</id>
    </interactant>
    <interactant intactId="EBI-744081">
        <id>Q96EQ0</id>
        <label>SGTB</label>
    </interactant>
    <organismsDiffer>false</organismsDiffer>
    <experiments>3</experiments>
</comment>
<comment type="interaction">
    <interactant intactId="EBI-2809203">
        <id>Q7Z6V5</id>
    </interactant>
    <interactant intactId="EBI-358489">
        <id>Q96GM5</id>
        <label>SMARCD1</label>
    </interactant>
    <organismsDiffer>false</organismsDiffer>
    <experiments>3</experiments>
</comment>
<comment type="interaction">
    <interactant intactId="EBI-2809203">
        <id>Q7Z6V5</id>
    </interactant>
    <interactant intactId="EBI-5235340">
        <id>Q7Z699</id>
        <label>SPRED1</label>
    </interactant>
    <organismsDiffer>false</organismsDiffer>
    <experiments>3</experiments>
</comment>
<comment type="alternative products">
    <event type="alternative splicing"/>
    <isoform>
        <id>Q7Z6V5-1</id>
        <name>1</name>
        <sequence type="displayed"/>
    </isoform>
    <isoform>
        <id>Q7Z6V5-2</id>
        <name>2</name>
        <sequence type="described" ref="VSP_025582"/>
    </isoform>
</comment>
<comment type="similarity">
    <text evidence="6">Belongs to the cytidine and deoxycytidylate deaminase family. ADAT2 subfamily.</text>
</comment>
<comment type="sequence caution" evidence="6">
    <conflict type="erroneous initiation">
        <sequence resource="EMBL-CDS" id="AAH37955"/>
    </conflict>
</comment>
<dbReference type="EC" id="3.5.4.33" evidence="6"/>
<dbReference type="EMBL" id="AK126201">
    <property type="protein sequence ID" value="BAG54295.1"/>
    <property type="molecule type" value="mRNA"/>
</dbReference>
<dbReference type="EMBL" id="BX538182">
    <property type="protein sequence ID" value="CAD98054.1"/>
    <property type="molecule type" value="mRNA"/>
</dbReference>
<dbReference type="EMBL" id="AL031320">
    <property type="status" value="NOT_ANNOTATED_CDS"/>
    <property type="molecule type" value="Genomic_DNA"/>
</dbReference>
<dbReference type="EMBL" id="CH471051">
    <property type="protein sequence ID" value="EAW47868.1"/>
    <property type="molecule type" value="Genomic_DNA"/>
</dbReference>
<dbReference type="EMBL" id="BC037955">
    <property type="protein sequence ID" value="AAH37955.2"/>
    <property type="status" value="ALT_INIT"/>
    <property type="molecule type" value="mRNA"/>
</dbReference>
<dbReference type="CCDS" id="CCDS43511.1">
    <molecule id="Q7Z6V5-1"/>
</dbReference>
<dbReference type="CCDS" id="CCDS69219.1">
    <molecule id="Q7Z6V5-2"/>
</dbReference>
<dbReference type="RefSeq" id="NP_001273188.1">
    <molecule id="Q7Z6V5-2"/>
    <property type="nucleotide sequence ID" value="NM_001286259.2"/>
</dbReference>
<dbReference type="RefSeq" id="NP_872309.2">
    <molecule id="Q7Z6V5-1"/>
    <property type="nucleotide sequence ID" value="NM_182503.3"/>
</dbReference>
<dbReference type="RefSeq" id="XP_011533742.1">
    <property type="nucleotide sequence ID" value="XM_011535440.1"/>
</dbReference>
<dbReference type="RefSeq" id="XP_011533746.1">
    <property type="nucleotide sequence ID" value="XM_011535444.2"/>
</dbReference>
<dbReference type="RefSeq" id="XP_016865749.1">
    <molecule id="Q7Z6V5-2"/>
    <property type="nucleotide sequence ID" value="XM_017010260.3"/>
</dbReference>
<dbReference type="RefSeq" id="XP_016865750.1">
    <property type="nucleotide sequence ID" value="XM_017010261.1"/>
</dbReference>
<dbReference type="RefSeq" id="XP_016865751.1">
    <property type="nucleotide sequence ID" value="XM_017010262.1"/>
</dbReference>
<dbReference type="RefSeq" id="XP_024302097.1">
    <molecule id="Q7Z6V5-2"/>
    <property type="nucleotide sequence ID" value="XM_024446329.2"/>
</dbReference>
<dbReference type="RefSeq" id="XP_047274145.1">
    <molecule id="Q7Z6V5-2"/>
    <property type="nucleotide sequence ID" value="XM_047418189.1"/>
</dbReference>
<dbReference type="RefSeq" id="XP_054210221.1">
    <molecule id="Q7Z6V5-2"/>
    <property type="nucleotide sequence ID" value="XM_054354246.1"/>
</dbReference>
<dbReference type="RefSeq" id="XP_054210222.1">
    <molecule id="Q7Z6V5-2"/>
    <property type="nucleotide sequence ID" value="XM_054354247.1"/>
</dbReference>
<dbReference type="RefSeq" id="XP_054210223.1">
    <molecule id="Q7Z6V5-2"/>
    <property type="nucleotide sequence ID" value="XM_054354248.1"/>
</dbReference>
<dbReference type="PDB" id="3DH1">
    <property type="method" value="X-ray"/>
    <property type="resolution" value="2.80 A"/>
    <property type="chains" value="A/B/C/D=20-185"/>
</dbReference>
<dbReference type="PDBsum" id="3DH1"/>
<dbReference type="SMR" id="Q7Z6V5"/>
<dbReference type="BioGRID" id="126410">
    <property type="interactions" value="20"/>
</dbReference>
<dbReference type="FunCoup" id="Q7Z6V5">
    <property type="interactions" value="1357"/>
</dbReference>
<dbReference type="IntAct" id="Q7Z6V5">
    <property type="interactions" value="8"/>
</dbReference>
<dbReference type="STRING" id="9606.ENSP00000237283"/>
<dbReference type="iPTMnet" id="Q7Z6V5"/>
<dbReference type="MetOSite" id="Q7Z6V5"/>
<dbReference type="PhosphoSitePlus" id="Q7Z6V5"/>
<dbReference type="BioMuta" id="ADAT2"/>
<dbReference type="DMDM" id="74750199"/>
<dbReference type="jPOST" id="Q7Z6V5"/>
<dbReference type="MassIVE" id="Q7Z6V5"/>
<dbReference type="PaxDb" id="9606-ENSP00000237283"/>
<dbReference type="PeptideAtlas" id="Q7Z6V5"/>
<dbReference type="ProteomicsDB" id="69466">
    <molecule id="Q7Z6V5-1"/>
</dbReference>
<dbReference type="ProteomicsDB" id="69467">
    <molecule id="Q7Z6V5-2"/>
</dbReference>
<dbReference type="Pumba" id="Q7Z6V5"/>
<dbReference type="Antibodypedia" id="33139">
    <property type="antibodies" value="61 antibodies from 18 providers"/>
</dbReference>
<dbReference type="DNASU" id="134637"/>
<dbReference type="Ensembl" id="ENST00000237283.9">
    <molecule id="Q7Z6V5-1"/>
    <property type="protein sequence ID" value="ENSP00000237283.8"/>
    <property type="gene ID" value="ENSG00000189007.16"/>
</dbReference>
<dbReference type="Ensembl" id="ENST00000606514.5">
    <molecule id="Q7Z6V5-2"/>
    <property type="protein sequence ID" value="ENSP00000475651.1"/>
    <property type="gene ID" value="ENSG00000189007.16"/>
</dbReference>
<dbReference type="GeneID" id="134637"/>
<dbReference type="KEGG" id="hsa:134637"/>
<dbReference type="MANE-Select" id="ENST00000237283.9">
    <property type="protein sequence ID" value="ENSP00000237283.8"/>
    <property type="RefSeq nucleotide sequence ID" value="NM_182503.3"/>
    <property type="RefSeq protein sequence ID" value="NP_872309.2"/>
</dbReference>
<dbReference type="UCSC" id="uc003qjj.4">
    <molecule id="Q7Z6V5-1"/>
    <property type="organism name" value="human"/>
</dbReference>
<dbReference type="AGR" id="HGNC:21172"/>
<dbReference type="CTD" id="134637"/>
<dbReference type="DisGeNET" id="134637"/>
<dbReference type="GeneCards" id="ADAT2"/>
<dbReference type="HGNC" id="HGNC:21172">
    <property type="gene designation" value="ADAT2"/>
</dbReference>
<dbReference type="HPA" id="ENSG00000189007">
    <property type="expression patterns" value="Low tissue specificity"/>
</dbReference>
<dbReference type="MIM" id="615388">
    <property type="type" value="gene"/>
</dbReference>
<dbReference type="neXtProt" id="NX_Q7Z6V5"/>
<dbReference type="OpenTargets" id="ENSG00000189007"/>
<dbReference type="PharmGKB" id="PA162375592"/>
<dbReference type="VEuPathDB" id="HostDB:ENSG00000189007"/>
<dbReference type="eggNOG" id="KOG1018">
    <property type="taxonomic scope" value="Eukaryota"/>
</dbReference>
<dbReference type="GeneTree" id="ENSGT00390000000280"/>
<dbReference type="HOGENOM" id="CLU_025810_8_3_1"/>
<dbReference type="InParanoid" id="Q7Z6V5"/>
<dbReference type="OMA" id="PCQMCAG"/>
<dbReference type="OrthoDB" id="408702at2759"/>
<dbReference type="PAN-GO" id="Q7Z6V5">
    <property type="GO annotations" value="2 GO annotations based on evolutionary models"/>
</dbReference>
<dbReference type="PhylomeDB" id="Q7Z6V5"/>
<dbReference type="TreeFam" id="TF313782"/>
<dbReference type="PathwayCommons" id="Q7Z6V5"/>
<dbReference type="Reactome" id="R-HSA-6782315">
    <property type="pathway name" value="tRNA modification in the nucleus and cytosol"/>
</dbReference>
<dbReference type="SignaLink" id="Q7Z6V5"/>
<dbReference type="BioGRID-ORCS" id="134637">
    <property type="hits" value="356 hits in 1162 CRISPR screens"/>
</dbReference>
<dbReference type="ChiTaRS" id="ADAT2">
    <property type="organism name" value="human"/>
</dbReference>
<dbReference type="EvolutionaryTrace" id="Q7Z6V5"/>
<dbReference type="GenomeRNAi" id="134637"/>
<dbReference type="Pharos" id="Q7Z6V5">
    <property type="development level" value="Tbio"/>
</dbReference>
<dbReference type="PRO" id="PR:Q7Z6V5"/>
<dbReference type="Proteomes" id="UP000005640">
    <property type="component" value="Chromosome 6"/>
</dbReference>
<dbReference type="RNAct" id="Q7Z6V5">
    <property type="molecule type" value="protein"/>
</dbReference>
<dbReference type="Bgee" id="ENSG00000189007">
    <property type="expression patterns" value="Expressed in rectum and 133 other cell types or tissues"/>
</dbReference>
<dbReference type="GO" id="GO:0005654">
    <property type="term" value="C:nucleoplasm"/>
    <property type="evidence" value="ECO:0000304"/>
    <property type="project" value="Reactome"/>
</dbReference>
<dbReference type="GO" id="GO:0052717">
    <property type="term" value="F:tRNA-specific adenosine-34 deaminase activity"/>
    <property type="evidence" value="ECO:0000318"/>
    <property type="project" value="GO_Central"/>
</dbReference>
<dbReference type="GO" id="GO:0008270">
    <property type="term" value="F:zinc ion binding"/>
    <property type="evidence" value="ECO:0007669"/>
    <property type="project" value="InterPro"/>
</dbReference>
<dbReference type="GO" id="GO:0002100">
    <property type="term" value="P:tRNA wobble adenosine to inosine editing"/>
    <property type="evidence" value="ECO:0000318"/>
    <property type="project" value="GO_Central"/>
</dbReference>
<dbReference type="CDD" id="cd01285">
    <property type="entry name" value="nucleoside_deaminase"/>
    <property type="match status" value="1"/>
</dbReference>
<dbReference type="FunFam" id="3.40.140.10:FF:000036">
    <property type="entry name" value="tRNA-specific adenosine deaminase 2"/>
    <property type="match status" value="1"/>
</dbReference>
<dbReference type="Gene3D" id="3.40.140.10">
    <property type="entry name" value="Cytidine Deaminase, domain 2"/>
    <property type="match status" value="1"/>
</dbReference>
<dbReference type="HAMAP" id="MF_00972">
    <property type="entry name" value="tRNA_aden_deaminase"/>
    <property type="match status" value="1"/>
</dbReference>
<dbReference type="InterPro" id="IPR016192">
    <property type="entry name" value="APOBEC/CMP_deaminase_Zn-bd"/>
</dbReference>
<dbReference type="InterPro" id="IPR002125">
    <property type="entry name" value="CMP_dCMP_dom"/>
</dbReference>
<dbReference type="InterPro" id="IPR016193">
    <property type="entry name" value="Cytidine_deaminase-like"/>
</dbReference>
<dbReference type="InterPro" id="IPR028883">
    <property type="entry name" value="tRNA_aden_deaminase"/>
</dbReference>
<dbReference type="PANTHER" id="PTHR11079">
    <property type="entry name" value="CYTOSINE DEAMINASE FAMILY MEMBER"/>
    <property type="match status" value="1"/>
</dbReference>
<dbReference type="PANTHER" id="PTHR11079:SF149">
    <property type="entry name" value="TRNA-SPECIFIC ADENOSINE DEAMINASE 2"/>
    <property type="match status" value="1"/>
</dbReference>
<dbReference type="Pfam" id="PF14437">
    <property type="entry name" value="MafB19-deam"/>
    <property type="match status" value="1"/>
</dbReference>
<dbReference type="SUPFAM" id="SSF53927">
    <property type="entry name" value="Cytidine deaminase-like"/>
    <property type="match status" value="1"/>
</dbReference>
<dbReference type="PROSITE" id="PS00903">
    <property type="entry name" value="CYT_DCMP_DEAMINASES_1"/>
    <property type="match status" value="1"/>
</dbReference>
<dbReference type="PROSITE" id="PS51747">
    <property type="entry name" value="CYT_DCMP_DEAMINASES_2"/>
    <property type="match status" value="1"/>
</dbReference>
<gene>
    <name type="primary">ADAT2</name>
    <name type="synonym">DEADC1</name>
</gene>
<proteinExistence type="evidence at protein level"/>
<organism>
    <name type="scientific">Homo sapiens</name>
    <name type="common">Human</name>
    <dbReference type="NCBI Taxonomy" id="9606"/>
    <lineage>
        <taxon>Eukaryota</taxon>
        <taxon>Metazoa</taxon>
        <taxon>Chordata</taxon>
        <taxon>Craniata</taxon>
        <taxon>Vertebrata</taxon>
        <taxon>Euteleostomi</taxon>
        <taxon>Mammalia</taxon>
        <taxon>Eutheria</taxon>
        <taxon>Euarchontoglires</taxon>
        <taxon>Primates</taxon>
        <taxon>Haplorrhini</taxon>
        <taxon>Catarrhini</taxon>
        <taxon>Hominidae</taxon>
        <taxon>Homo</taxon>
    </lineage>
</organism>
<sequence>MEAKAAPKPAASGACSVSAEETEKWMEEAMHMAKEALENTEVPVGCLMVYNNEVVGKGRNEVNQTKNATRHAEMVAIDQVLDWCRQSGKSPSEVFEHTVLYVTVEPCIMCAAALRLMKIPLVVYGCQNERFGGCGSVLNIASADLPNTGRPFQCIPGYRAEEAVEMLKTFYKQENPNAPKSKVRKKECQKS</sequence>
<keyword id="KW-0002">3D-structure</keyword>
<keyword id="KW-0025">Alternative splicing</keyword>
<keyword id="KW-0378">Hydrolase</keyword>
<keyword id="KW-0479">Metal-binding</keyword>
<keyword id="KW-1267">Proteomics identification</keyword>
<keyword id="KW-1185">Reference proteome</keyword>
<keyword id="KW-0819">tRNA processing</keyword>
<keyword id="KW-0862">Zinc</keyword>
<feature type="chain" id="PRO_0000287653" description="tRNA-specific adenosine deaminase 2">
    <location>
        <begin position="1"/>
        <end position="191"/>
    </location>
</feature>
<feature type="domain" description="CMP/dCMP-type deaminase" evidence="2">
    <location>
        <begin position="20"/>
        <end position="145"/>
    </location>
</feature>
<feature type="active site" description="Proton donor" evidence="1">
    <location>
        <position position="73"/>
    </location>
</feature>
<feature type="binding site" evidence="3">
    <location>
        <position position="71"/>
    </location>
    <ligand>
        <name>Zn(2+)</name>
        <dbReference type="ChEBI" id="CHEBI:29105"/>
        <note>catalytic</note>
    </ligand>
</feature>
<feature type="binding site" evidence="3">
    <location>
        <position position="107"/>
    </location>
    <ligand>
        <name>Zn(2+)</name>
        <dbReference type="ChEBI" id="CHEBI:29105"/>
        <note>catalytic</note>
    </ligand>
</feature>
<feature type="binding site" evidence="3">
    <location>
        <position position="110"/>
    </location>
    <ligand>
        <name>Zn(2+)</name>
        <dbReference type="ChEBI" id="CHEBI:29105"/>
        <note>catalytic</note>
    </ligand>
</feature>
<feature type="splice variant" id="VSP_025582" description="In isoform 2." evidence="4 5">
    <location>
        <begin position="1"/>
        <end position="47"/>
    </location>
</feature>
<feature type="helix" evidence="7">
    <location>
        <begin position="20"/>
        <end position="38"/>
    </location>
</feature>
<feature type="strand" evidence="7">
    <location>
        <begin position="45"/>
        <end position="50"/>
    </location>
</feature>
<feature type="strand" evidence="7">
    <location>
        <begin position="53"/>
        <end position="59"/>
    </location>
</feature>
<feature type="helix" evidence="7">
    <location>
        <begin position="62"/>
        <end position="65"/>
    </location>
</feature>
<feature type="helix" evidence="7">
    <location>
        <begin position="72"/>
        <end position="87"/>
    </location>
</feature>
<feature type="helix" evidence="7">
    <location>
        <begin position="91"/>
        <end position="95"/>
    </location>
</feature>
<feature type="strand" evidence="7">
    <location>
        <begin position="98"/>
        <end position="104"/>
    </location>
</feature>
<feature type="helix" evidence="7">
    <location>
        <begin position="108"/>
        <end position="117"/>
    </location>
</feature>
<feature type="strand" evidence="7">
    <location>
        <begin position="121"/>
        <end position="126"/>
    </location>
</feature>
<feature type="turn" evidence="7">
    <location>
        <begin position="129"/>
        <end position="131"/>
    </location>
</feature>
<feature type="strand" evidence="7">
    <location>
        <begin position="153"/>
        <end position="155"/>
    </location>
</feature>
<feature type="helix" evidence="7">
    <location>
        <begin position="160"/>
        <end position="170"/>
    </location>
</feature>
<name>ADAT2_HUMAN</name>
<accession>Q7Z6V5</accession>
<accession>A6NL12</accession>
<accession>B3KWY3</accession>
<accession>Q7Z327</accession>
<accession>Q8IY39</accession>
<protein>
    <recommendedName>
        <fullName>tRNA-specific adenosine deaminase 2</fullName>
        <ecNumber evidence="6">3.5.4.33</ecNumber>
    </recommendedName>
    <alternativeName>
        <fullName>Deaminase domain-containing protein 1</fullName>
    </alternativeName>
    <alternativeName>
        <fullName>tRNA-specific adenosine-34 deaminase subunit ADAT2</fullName>
    </alternativeName>
</protein>
<evidence type="ECO:0000250" key="1"/>
<evidence type="ECO:0000255" key="2">
    <source>
        <dbReference type="PROSITE-ProRule" id="PRU01083"/>
    </source>
</evidence>
<evidence type="ECO:0000269" key="3">
    <source ref="7"/>
</evidence>
<evidence type="ECO:0000303" key="4">
    <source>
    </source>
</evidence>
<evidence type="ECO:0000303" key="5">
    <source>
    </source>
</evidence>
<evidence type="ECO:0000305" key="6"/>
<evidence type="ECO:0007829" key="7">
    <source>
        <dbReference type="PDB" id="3DH1"/>
    </source>
</evidence>